<accession>P75140</accession>
<accession>Q50350</accession>
<reference key="1">
    <citation type="journal article" date="1996" name="Nucleic Acids Res.">
        <title>Complete sequence analysis of the genome of the bacterium Mycoplasma pneumoniae.</title>
        <authorList>
            <person name="Himmelreich R."/>
            <person name="Hilbert H."/>
            <person name="Plagens H."/>
            <person name="Pirkl E."/>
            <person name="Li B.-C."/>
            <person name="Herrmann R."/>
        </authorList>
    </citation>
    <scope>NUCLEOTIDE SEQUENCE [LARGE SCALE GENOMIC DNA]</scope>
    <source>
        <strain>ATCC 29342 / M129 / Subtype 1</strain>
    </source>
</reference>
<reference key="2">
    <citation type="journal article" date="1994" name="Mol. Microbiol.">
        <title>Identification and characterization of hitherto unknown Mycoplasma pneumoniae proteins.</title>
        <authorList>
            <person name="Proft T."/>
            <person name="Herrmann R."/>
        </authorList>
    </citation>
    <scope>NUCLEOTIDE SEQUENCE [GENOMIC DNA] OF 83-125</scope>
    <source>
        <strain>ATCC 29342 / M129 / Subtype 1</strain>
    </source>
</reference>
<organism>
    <name type="scientific">Mycoplasma pneumoniae (strain ATCC 29342 / M129 / Subtype 1)</name>
    <name type="common">Mycoplasmoides pneumoniae</name>
    <dbReference type="NCBI Taxonomy" id="272634"/>
    <lineage>
        <taxon>Bacteria</taxon>
        <taxon>Bacillati</taxon>
        <taxon>Mycoplasmatota</taxon>
        <taxon>Mycoplasmoidales</taxon>
        <taxon>Mycoplasmoidaceae</taxon>
        <taxon>Mycoplasmoides</taxon>
    </lineage>
</organism>
<proteinExistence type="inferred from homology"/>
<evidence type="ECO:0000256" key="1">
    <source>
        <dbReference type="SAM" id="MobiDB-lite"/>
    </source>
</evidence>
<evidence type="ECO:0000305" key="2"/>
<name>Y146_MYCPN</name>
<sequence length="265" mass="29140">MLASCGAKGRFDQVDDGKIKLASSLTGKRDVILQEVLNKYNSRKAKDDYPIEITKIAGSYDGGRSDLQTRLSVKDKTTFYNMILNYSDTISTLGRSNMELPLDSVDVSQFSENFLSFNDRISGISRKGIYGIPVSMSTDILVINGPVLHYILNSAKKKDGAVTKKNASNSNGNEGTLTVNNDQQTTELWKKIEEAAKTNGKTTQEQTKRDAKQSTSLIQLKEGSANTTEGNASESDKEIKKSWGNYQEVDGGLKGYTFKASVFEN</sequence>
<dbReference type="EMBL" id="U00089">
    <property type="protein sequence ID" value="AAB95656.1"/>
    <property type="molecule type" value="Genomic_DNA"/>
</dbReference>
<dbReference type="EMBL" id="Z32651">
    <property type="protein sequence ID" value="CAA83572.1"/>
    <property type="molecule type" value="Genomic_DNA"/>
</dbReference>
<dbReference type="PIR" id="S73334">
    <property type="entry name" value="S73334"/>
</dbReference>
<dbReference type="STRING" id="272634.MPN_146"/>
<dbReference type="EnsemblBacteria" id="AAB95656">
    <property type="protein sequence ID" value="AAB95656"/>
    <property type="gene ID" value="MPN_146"/>
</dbReference>
<dbReference type="KEGG" id="mpn:MPN_146"/>
<dbReference type="HOGENOM" id="CLU_017227_0_0_14"/>
<dbReference type="Proteomes" id="UP000000808">
    <property type="component" value="Chromosome"/>
</dbReference>
<dbReference type="Gene3D" id="3.40.190.10">
    <property type="entry name" value="Periplasmic binding protein-like II"/>
    <property type="match status" value="1"/>
</dbReference>
<dbReference type="InterPro" id="IPR004984">
    <property type="entry name" value="Mycoplasma_lipoprotein_cen_dom"/>
</dbReference>
<dbReference type="Pfam" id="PF03305">
    <property type="entry name" value="Lipoprotein_X"/>
    <property type="match status" value="1"/>
</dbReference>
<protein>
    <recommendedName>
        <fullName>Uncharacterized protein MPN_146</fullName>
    </recommendedName>
</protein>
<feature type="chain" id="PRO_0000215277" description="Uncharacterized protein MPN_146">
    <location>
        <begin position="1"/>
        <end position="265"/>
    </location>
</feature>
<feature type="region of interest" description="Disordered" evidence="1">
    <location>
        <begin position="162"/>
        <end position="183"/>
    </location>
</feature>
<feature type="region of interest" description="Disordered" evidence="1">
    <location>
        <begin position="196"/>
        <end position="239"/>
    </location>
</feature>
<feature type="compositionally biased region" description="Polar residues" evidence="1">
    <location>
        <begin position="165"/>
        <end position="183"/>
    </location>
</feature>
<feature type="compositionally biased region" description="Polar residues" evidence="1">
    <location>
        <begin position="213"/>
        <end position="233"/>
    </location>
</feature>
<feature type="sequence conflict" description="In Ref. 2; CAA83572." evidence="2" ref="2">
    <original>S</original>
    <variation>R</variation>
    <location>
        <position position="122"/>
    </location>
</feature>
<feature type="sequence conflict" description="In Ref. 2." evidence="2" ref="2">
    <original>S</original>
    <variation>P</variation>
    <location>
        <position position="125"/>
    </location>
</feature>
<comment type="similarity">
    <text evidence="2">Belongs to the MG185/MG260 family.</text>
</comment>
<keyword id="KW-1185">Reference proteome</keyword>
<gene>
    <name type="ordered locus">MPN_146</name>
    <name type="ORF">E07_orf265</name>
    <name type="ORF">MP008</name>
</gene>